<protein>
    <recommendedName>
        <fullName>Heat shock protein beta-2</fullName>
        <shortName>HspB2</shortName>
    </recommendedName>
</protein>
<reference key="1">
    <citation type="journal article" date="1997" name="Genomics">
        <title>Identification and characterization of the gene encoding a new member of the alpha-crystallin/small hsp family, closely linked to the alphaB-crystallin gene in a head-to-head manner.</title>
        <authorList>
            <person name="Iwaki A."/>
            <person name="Nagano T."/>
            <person name="Nakagawa M."/>
            <person name="Iwaki T."/>
            <person name="Fukumaki Y."/>
        </authorList>
    </citation>
    <scope>NUCLEOTIDE SEQUENCE [GENOMIC DNA]</scope>
    <source>
        <strain>Sprague-Dawley</strain>
        <tissue>Liver</tissue>
    </source>
</reference>
<comment type="function">
    <text evidence="1">May regulate the kinase DMPK.</text>
</comment>
<comment type="subunit">
    <text evidence="1">Interacts with DMPK; may enhance its kinase activity.</text>
</comment>
<comment type="subcellular location">
    <subcellularLocation>
        <location evidence="1">Cytoplasm</location>
    </subcellularLocation>
    <subcellularLocation>
        <location evidence="1">Nucleus</location>
    </subcellularLocation>
    <text evidence="1">Localizes to nuclear foci.</text>
</comment>
<comment type="similarity">
    <text evidence="2">Belongs to the small heat shock protein (HSP20) family.</text>
</comment>
<organism>
    <name type="scientific">Rattus norvegicus</name>
    <name type="common">Rat</name>
    <dbReference type="NCBI Taxonomy" id="10116"/>
    <lineage>
        <taxon>Eukaryota</taxon>
        <taxon>Metazoa</taxon>
        <taxon>Chordata</taxon>
        <taxon>Craniata</taxon>
        <taxon>Vertebrata</taxon>
        <taxon>Euteleostomi</taxon>
        <taxon>Mammalia</taxon>
        <taxon>Eutheria</taxon>
        <taxon>Euarchontoglires</taxon>
        <taxon>Glires</taxon>
        <taxon>Rodentia</taxon>
        <taxon>Myomorpha</taxon>
        <taxon>Muroidea</taxon>
        <taxon>Muridae</taxon>
        <taxon>Murinae</taxon>
        <taxon>Rattus</taxon>
    </lineage>
</organism>
<dbReference type="EMBL" id="U75899">
    <property type="protein sequence ID" value="AAB82758.1"/>
    <property type="molecule type" value="Genomic_DNA"/>
</dbReference>
<dbReference type="RefSeq" id="NP_569115.1">
    <property type="nucleotide sequence ID" value="NM_130431.2"/>
</dbReference>
<dbReference type="SMR" id="O35878"/>
<dbReference type="BioGRID" id="250908">
    <property type="interactions" value="1"/>
</dbReference>
<dbReference type="CORUM" id="O35878"/>
<dbReference type="FunCoup" id="O35878">
    <property type="interactions" value="52"/>
</dbReference>
<dbReference type="STRING" id="10116.ENSRNOP00000013960"/>
<dbReference type="GlyGen" id="O35878">
    <property type="glycosylation" value="1 site, 1 O-linked glycan (1 site)"/>
</dbReference>
<dbReference type="iPTMnet" id="O35878"/>
<dbReference type="PhosphoSitePlus" id="O35878"/>
<dbReference type="PaxDb" id="10116-ENSRNOP00000013960"/>
<dbReference type="GeneID" id="161476"/>
<dbReference type="KEGG" id="rno:161476"/>
<dbReference type="UCSC" id="RGD:70914">
    <property type="organism name" value="rat"/>
</dbReference>
<dbReference type="AGR" id="RGD:70914"/>
<dbReference type="CTD" id="3316"/>
<dbReference type="RGD" id="70914">
    <property type="gene designation" value="Hspb2"/>
</dbReference>
<dbReference type="VEuPathDB" id="HostDB:ENSRNOG00000051792"/>
<dbReference type="eggNOG" id="KOG3591">
    <property type="taxonomic scope" value="Eukaryota"/>
</dbReference>
<dbReference type="HOGENOM" id="CLU_095001_1_0_1"/>
<dbReference type="InParanoid" id="O35878"/>
<dbReference type="OrthoDB" id="1431247at2759"/>
<dbReference type="PhylomeDB" id="O35878"/>
<dbReference type="TreeFam" id="TF105049"/>
<dbReference type="PRO" id="PR:O35878"/>
<dbReference type="Proteomes" id="UP000002494">
    <property type="component" value="Chromosome 8"/>
</dbReference>
<dbReference type="Bgee" id="ENSRNOG00000010402">
    <property type="expression patterns" value="Expressed in heart and 19 other cell types or tissues"/>
</dbReference>
<dbReference type="GO" id="GO:0005737">
    <property type="term" value="C:cytoplasm"/>
    <property type="evidence" value="ECO:0000250"/>
    <property type="project" value="UniProtKB"/>
</dbReference>
<dbReference type="GO" id="GO:0005634">
    <property type="term" value="C:nucleus"/>
    <property type="evidence" value="ECO:0000250"/>
    <property type="project" value="UniProtKB"/>
</dbReference>
<dbReference type="GO" id="GO:0005212">
    <property type="term" value="F:structural constituent of eye lens"/>
    <property type="evidence" value="ECO:0007669"/>
    <property type="project" value="InterPro"/>
</dbReference>
<dbReference type="GO" id="GO:0051082">
    <property type="term" value="F:unfolded protein binding"/>
    <property type="evidence" value="ECO:0000318"/>
    <property type="project" value="GO_Central"/>
</dbReference>
<dbReference type="GO" id="GO:0043066">
    <property type="term" value="P:negative regulation of apoptotic process"/>
    <property type="evidence" value="ECO:0000318"/>
    <property type="project" value="GO_Central"/>
</dbReference>
<dbReference type="GO" id="GO:0042026">
    <property type="term" value="P:protein refolding"/>
    <property type="evidence" value="ECO:0000318"/>
    <property type="project" value="GO_Central"/>
</dbReference>
<dbReference type="GO" id="GO:0009408">
    <property type="term" value="P:response to heat"/>
    <property type="evidence" value="ECO:0000318"/>
    <property type="project" value="GO_Central"/>
</dbReference>
<dbReference type="GO" id="GO:0007525">
    <property type="term" value="P:somatic muscle development"/>
    <property type="evidence" value="ECO:0000266"/>
    <property type="project" value="RGD"/>
</dbReference>
<dbReference type="FunFam" id="2.60.40.790:FF:000025">
    <property type="entry name" value="heat shock protein beta-2"/>
    <property type="match status" value="1"/>
</dbReference>
<dbReference type="Gene3D" id="2.60.40.790">
    <property type="match status" value="1"/>
</dbReference>
<dbReference type="InterPro" id="IPR002068">
    <property type="entry name" value="A-crystallin/Hsp20_dom"/>
</dbReference>
<dbReference type="InterPro" id="IPR001436">
    <property type="entry name" value="Alpha-crystallin/sHSP_animal"/>
</dbReference>
<dbReference type="InterPro" id="IPR003090">
    <property type="entry name" value="Alpha-crystallin_N"/>
</dbReference>
<dbReference type="InterPro" id="IPR008978">
    <property type="entry name" value="HSP20-like_chaperone"/>
</dbReference>
<dbReference type="PANTHER" id="PTHR45640:SF27">
    <property type="entry name" value="HEAT SHOCK PROTEIN BETA-2"/>
    <property type="match status" value="1"/>
</dbReference>
<dbReference type="PANTHER" id="PTHR45640">
    <property type="entry name" value="HEAT SHOCK PROTEIN HSP-12.2-RELATED"/>
    <property type="match status" value="1"/>
</dbReference>
<dbReference type="Pfam" id="PF00525">
    <property type="entry name" value="Crystallin"/>
    <property type="match status" value="1"/>
</dbReference>
<dbReference type="Pfam" id="PF00011">
    <property type="entry name" value="HSP20"/>
    <property type="match status" value="1"/>
</dbReference>
<dbReference type="PRINTS" id="PR00299">
    <property type="entry name" value="ACRYSTALLIN"/>
</dbReference>
<dbReference type="SUPFAM" id="SSF49764">
    <property type="entry name" value="HSP20-like chaperones"/>
    <property type="match status" value="1"/>
</dbReference>
<dbReference type="PROSITE" id="PS01031">
    <property type="entry name" value="SHSP"/>
    <property type="match status" value="1"/>
</dbReference>
<feature type="chain" id="PRO_0000125935" description="Heat shock protein beta-2">
    <location>
        <begin position="1"/>
        <end position="182"/>
    </location>
</feature>
<feature type="domain" description="sHSP" evidence="2">
    <location>
        <begin position="55"/>
        <end position="163"/>
    </location>
</feature>
<accession>O35878</accession>
<keyword id="KW-0963">Cytoplasm</keyword>
<keyword id="KW-0539">Nucleus</keyword>
<keyword id="KW-1185">Reference proteome</keyword>
<keyword id="KW-0346">Stress response</keyword>
<evidence type="ECO:0000250" key="1"/>
<evidence type="ECO:0000255" key="2">
    <source>
        <dbReference type="PROSITE-ProRule" id="PRU00285"/>
    </source>
</evidence>
<sequence length="182" mass="20347">MSGRTVPHAHPATAEYEFANPSRLGEQRFGEGLLPEEILTPTLYHGYYVRPRAARAGEGGRAGASELRLSEGKFQAFLDVSHFTPDEVTVRTVDNLLEVSARHPQRLDRHGFVSREFCRTYVLPADVDPWRVRAALSHDGILNLEAPRGGRHLDTEVNEVYISLLPAPPDPEEEEEVARVEP</sequence>
<gene>
    <name type="primary">Hspb2</name>
</gene>
<name>HSPB2_RAT</name>
<proteinExistence type="inferred from homology"/>